<keyword id="KW-1003">Cell membrane</keyword>
<keyword id="KW-0178">Competence</keyword>
<keyword id="KW-1015">Disulfide bond</keyword>
<keyword id="KW-0281">Fimbrium</keyword>
<keyword id="KW-0472">Membrane</keyword>
<keyword id="KW-0488">Methylation</keyword>
<keyword id="KW-1185">Reference proteome</keyword>
<keyword id="KW-0812">Transmembrane</keyword>
<keyword id="KW-1133">Transmembrane helix</keyword>
<keyword id="KW-0813">Transport</keyword>
<name>COMGC_HALH5</name>
<reference key="1">
    <citation type="journal article" date="2000" name="Nucleic Acids Res.">
        <title>Complete genome sequence of the alkaliphilic bacterium Bacillus halodurans and genomic sequence comparison with Bacillus subtilis.</title>
        <authorList>
            <person name="Takami H."/>
            <person name="Nakasone K."/>
            <person name="Takaki Y."/>
            <person name="Maeno G."/>
            <person name="Sasaki R."/>
            <person name="Masui N."/>
            <person name="Fuji F."/>
            <person name="Hirama C."/>
            <person name="Nakamura Y."/>
            <person name="Ogasawara N."/>
            <person name="Kuhara S."/>
            <person name="Horikoshi K."/>
        </authorList>
    </citation>
    <scope>NUCLEOTIDE SEQUENCE [LARGE SCALE GENOMIC DNA]</scope>
    <source>
        <strain>ATCC BAA-125 / DSM 18197 / FERM 7344 / JCM 9153 / C-125</strain>
    </source>
</reference>
<proteinExistence type="inferred from homology"/>
<protein>
    <recommendedName>
        <fullName evidence="4">Competence protein ComGC</fullName>
    </recommendedName>
    <alternativeName>
        <fullName>ComG operon protein 3 homolog</fullName>
    </alternativeName>
</protein>
<sequence length="102" mass="11368">MKKPFHHQAGFTLVEMMIVLMIISILLLVALPSMTKNNEVAGDKGCEATVKLLQTQVHAYEIDHDRLPTNLDALKREGYVEHTECPNGKKLTLRNGVVAISE</sequence>
<gene>
    <name type="primary">comGC</name>
    <name type="ordered locus">BH2827</name>
</gene>
<dbReference type="EMBL" id="BA000004">
    <property type="protein sequence ID" value="BAB06546.1"/>
    <property type="molecule type" value="Genomic_DNA"/>
</dbReference>
<dbReference type="PIR" id="C84003">
    <property type="entry name" value="C84003"/>
</dbReference>
<dbReference type="RefSeq" id="WP_010898975.1">
    <property type="nucleotide sequence ID" value="NC_002570.2"/>
</dbReference>
<dbReference type="SMR" id="Q9K923"/>
<dbReference type="STRING" id="272558.gene:10728727"/>
<dbReference type="KEGG" id="bha:BH2827"/>
<dbReference type="eggNOG" id="COG4537">
    <property type="taxonomic scope" value="Bacteria"/>
</dbReference>
<dbReference type="HOGENOM" id="CLU_091705_9_0_9"/>
<dbReference type="OrthoDB" id="1798043at2"/>
<dbReference type="Proteomes" id="UP000001258">
    <property type="component" value="Chromosome"/>
</dbReference>
<dbReference type="GO" id="GO:0009986">
    <property type="term" value="C:cell surface"/>
    <property type="evidence" value="ECO:0007669"/>
    <property type="project" value="UniProtKB-SubCell"/>
</dbReference>
<dbReference type="GO" id="GO:0009289">
    <property type="term" value="C:pilus"/>
    <property type="evidence" value="ECO:0007669"/>
    <property type="project" value="UniProtKB-SubCell"/>
</dbReference>
<dbReference type="GO" id="GO:0005886">
    <property type="term" value="C:plasma membrane"/>
    <property type="evidence" value="ECO:0007669"/>
    <property type="project" value="UniProtKB-SubCell"/>
</dbReference>
<dbReference type="GO" id="GO:0015627">
    <property type="term" value="C:type II protein secretion system complex"/>
    <property type="evidence" value="ECO:0007669"/>
    <property type="project" value="InterPro"/>
</dbReference>
<dbReference type="GO" id="GO:0030420">
    <property type="term" value="P:establishment of competence for transformation"/>
    <property type="evidence" value="ECO:0007669"/>
    <property type="project" value="UniProtKB-KW"/>
</dbReference>
<dbReference type="GO" id="GO:0015628">
    <property type="term" value="P:protein secretion by the type II secretion system"/>
    <property type="evidence" value="ECO:0007669"/>
    <property type="project" value="InterPro"/>
</dbReference>
<dbReference type="Gene3D" id="3.30.700.10">
    <property type="entry name" value="Glycoprotein, Type 4 Pilin"/>
    <property type="match status" value="1"/>
</dbReference>
<dbReference type="InterPro" id="IPR000983">
    <property type="entry name" value="Bac_GSPG_pilin"/>
</dbReference>
<dbReference type="InterPro" id="IPR016940">
    <property type="entry name" value="ComGC"/>
</dbReference>
<dbReference type="InterPro" id="IPR012902">
    <property type="entry name" value="N_methyl_site"/>
</dbReference>
<dbReference type="InterPro" id="IPR045584">
    <property type="entry name" value="Pilin-like"/>
</dbReference>
<dbReference type="InterPro" id="IPR050470">
    <property type="entry name" value="T4P/T2SS_Core"/>
</dbReference>
<dbReference type="NCBIfam" id="TIGR02532">
    <property type="entry name" value="IV_pilin_GFxxxE"/>
    <property type="match status" value="1"/>
</dbReference>
<dbReference type="NCBIfam" id="NF040999">
    <property type="entry name" value="pilin_ComGC"/>
    <property type="match status" value="1"/>
</dbReference>
<dbReference type="PANTHER" id="PTHR30093">
    <property type="entry name" value="GENERAL SECRETION PATHWAY PROTEIN G"/>
    <property type="match status" value="1"/>
</dbReference>
<dbReference type="PANTHER" id="PTHR30093:SF2">
    <property type="entry name" value="TYPE II SECRETION SYSTEM PROTEIN H"/>
    <property type="match status" value="1"/>
</dbReference>
<dbReference type="Pfam" id="PF07963">
    <property type="entry name" value="N_methyl"/>
    <property type="match status" value="1"/>
</dbReference>
<dbReference type="PIRSF" id="PIRSF029928">
    <property type="entry name" value="Late_competence_ComGC"/>
    <property type="match status" value="1"/>
</dbReference>
<dbReference type="PRINTS" id="PR00813">
    <property type="entry name" value="BCTERIALGSPG"/>
</dbReference>
<dbReference type="SUPFAM" id="SSF54523">
    <property type="entry name" value="Pili subunits"/>
    <property type="match status" value="1"/>
</dbReference>
<dbReference type="PROSITE" id="PS00409">
    <property type="entry name" value="PROKAR_NTER_METHYL"/>
    <property type="match status" value="1"/>
</dbReference>
<feature type="propeptide" id="PRO_0000024262" description="Leader sequence" evidence="6">
    <location>
        <begin position="1"/>
        <end position="10"/>
    </location>
</feature>
<feature type="chain" id="PRO_0000024263" description="Competence protein ComGC">
    <location>
        <begin position="11"/>
        <end position="102"/>
    </location>
</feature>
<feature type="transmembrane region" description="Helical" evidence="5">
    <location>
        <begin position="11"/>
        <end position="31"/>
    </location>
</feature>
<feature type="region of interest" description="May be involved in polymerization of ComGC" evidence="2">
    <location>
        <begin position="9"/>
        <end position="34"/>
    </location>
</feature>
<feature type="modified residue" description="N-methylphenylalanine" evidence="6">
    <location>
        <position position="11"/>
    </location>
</feature>
<feature type="disulfide bond" evidence="1">
    <location>
        <begin position="46"/>
        <end position="85"/>
    </location>
</feature>
<evidence type="ECO:0000250" key="1"/>
<evidence type="ECO:0000250" key="2">
    <source>
        <dbReference type="UniProtKB" id="A0A0H2URU9"/>
    </source>
</evidence>
<evidence type="ECO:0000250" key="3">
    <source>
        <dbReference type="UniProtKB" id="P25955"/>
    </source>
</evidence>
<evidence type="ECO:0000250" key="4">
    <source>
        <dbReference type="UniProtKB" id="Q8DN88"/>
    </source>
</evidence>
<evidence type="ECO:0000255" key="5"/>
<evidence type="ECO:0000255" key="6">
    <source>
        <dbReference type="PROSITE-ProRule" id="PRU01070"/>
    </source>
</evidence>
<evidence type="ECO:0000305" key="7"/>
<accession>Q9K923</accession>
<comment type="function">
    <text evidence="3 4">Major component of the type IV-like pilus (T4P) that plays a role in transformation (By similarity). Transformation pili are dynamically extended and retracted, perhaps thereby promoting DNA uptake and transformation (By similarity). Required for transformation. Required for DNA binding (By similarity).</text>
</comment>
<comment type="subunit">
    <text evidence="4">The transformation pili are flexible filaments, consisting mainly of the major pilin ComGC and smaller amounts of the minor pilins, including at least ComGD, ComGF and ComGG. Homodimer. Forms higher-order multimers. Interacts with ComGG; the interaction is probably direct.</text>
</comment>
<comment type="subcellular location">
    <subcellularLocation>
        <location evidence="3">Cell membrane</location>
        <topology evidence="3">Single-pass membrane protein</topology>
    </subcellularLocation>
    <subcellularLocation>
        <location evidence="3">Cell surface</location>
    </subcellularLocation>
    <subcellularLocation>
        <location evidence="4">Fimbrium</location>
    </subcellularLocation>
    <text evidence="3">The unprocessed form is an integral membrane protein with its C-terminus outside the membrane. Upon cleavage, it is translocated to the outer face of the membrane.</text>
</comment>
<comment type="similarity">
    <text evidence="7">Belongs to the ComGC family.</text>
</comment>
<organism>
    <name type="scientific">Halalkalibacterium halodurans (strain ATCC BAA-125 / DSM 18197 / FERM 7344 / JCM 9153 / C-125)</name>
    <name type="common">Bacillus halodurans</name>
    <dbReference type="NCBI Taxonomy" id="272558"/>
    <lineage>
        <taxon>Bacteria</taxon>
        <taxon>Bacillati</taxon>
        <taxon>Bacillota</taxon>
        <taxon>Bacilli</taxon>
        <taxon>Bacillales</taxon>
        <taxon>Bacillaceae</taxon>
        <taxon>Halalkalibacterium (ex Joshi et al. 2022)</taxon>
    </lineage>
</organism>